<evidence type="ECO:0000250" key="1">
    <source>
        <dbReference type="UniProtKB" id="L0E2Z4"/>
    </source>
</evidence>
<evidence type="ECO:0000250" key="2">
    <source>
        <dbReference type="UniProtKB" id="O93868"/>
    </source>
</evidence>
<evidence type="ECO:0000255" key="3"/>
<evidence type="ECO:0000255" key="4">
    <source>
        <dbReference type="PROSITE-ProRule" id="PRU10001"/>
    </source>
</evidence>
<evidence type="ECO:0000269" key="5">
    <source>
    </source>
</evidence>
<evidence type="ECO:0000269" key="6">
    <source>
    </source>
</evidence>
<evidence type="ECO:0000269" key="7">
    <source>
    </source>
</evidence>
<evidence type="ECO:0000269" key="8">
    <source>
    </source>
</evidence>
<evidence type="ECO:0000305" key="9"/>
<protein>
    <recommendedName>
        <fullName>Uncharacterized oxidoreductase TDA5</fullName>
        <ecNumber>1.-.-.-</ecNumber>
    </recommendedName>
    <alternativeName>
        <fullName>Topoisomerase I damage affected protein 5</fullName>
    </alternativeName>
</protein>
<feature type="chain" id="PRO_0000247778" description="Uncharacterized oxidoreductase TDA5">
    <location>
        <begin position="1"/>
        <end position="326"/>
    </location>
</feature>
<feature type="transmembrane region" description="Helical" evidence="3">
    <location>
        <begin position="9"/>
        <end position="29"/>
    </location>
</feature>
<feature type="transmembrane region" description="Helical" evidence="3">
    <location>
        <begin position="33"/>
        <end position="53"/>
    </location>
</feature>
<feature type="active site" description="Proton acceptor" evidence="4">
    <location>
        <position position="214"/>
    </location>
</feature>
<feature type="active site" description="Lowers pKa of active site Tyr" evidence="2">
    <location>
        <position position="218"/>
    </location>
</feature>
<feature type="binding site" evidence="1">
    <location>
        <position position="120"/>
    </location>
    <ligand>
        <name>NADP(+)</name>
        <dbReference type="ChEBI" id="CHEBI:58349"/>
    </ligand>
</feature>
<feature type="binding site" evidence="2">
    <location>
        <position position="148"/>
    </location>
    <ligand>
        <name>NADP(+)</name>
        <dbReference type="ChEBI" id="CHEBI:58349"/>
    </ligand>
</feature>
<feature type="binding site" evidence="2">
    <location>
        <position position="214"/>
    </location>
    <ligand>
        <name>NADP(+)</name>
        <dbReference type="ChEBI" id="CHEBI:58349"/>
    </ligand>
</feature>
<feature type="binding site" evidence="2">
    <location>
        <position position="218"/>
    </location>
    <ligand>
        <name>NADP(+)</name>
        <dbReference type="ChEBI" id="CHEBI:58349"/>
    </ligand>
</feature>
<feature type="binding site" evidence="1">
    <location>
        <position position="252"/>
    </location>
    <ligand>
        <name>NADP(+)</name>
        <dbReference type="ChEBI" id="CHEBI:58349"/>
    </ligand>
</feature>
<name>TDA5_YEAST</name>
<organism>
    <name type="scientific">Saccharomyces cerevisiae (strain ATCC 204508 / S288c)</name>
    <name type="common">Baker's yeast</name>
    <dbReference type="NCBI Taxonomy" id="559292"/>
    <lineage>
        <taxon>Eukaryota</taxon>
        <taxon>Fungi</taxon>
        <taxon>Dikarya</taxon>
        <taxon>Ascomycota</taxon>
        <taxon>Saccharomycotina</taxon>
        <taxon>Saccharomycetes</taxon>
        <taxon>Saccharomycetales</taxon>
        <taxon>Saccharomycetaceae</taxon>
        <taxon>Saccharomyces</taxon>
    </lineage>
</organism>
<gene>
    <name type="primary">TDA5</name>
    <name type="ordered locus">YLR426W</name>
</gene>
<accession>Q06417</accession>
<accession>D6VZ62</accession>
<proteinExistence type="evidence at protein level"/>
<reference key="1">
    <citation type="journal article" date="1997" name="Nature">
        <title>The nucleotide sequence of Saccharomyces cerevisiae chromosome XII.</title>
        <authorList>
            <person name="Johnston M."/>
            <person name="Hillier L.W."/>
            <person name="Riles L."/>
            <person name="Albermann K."/>
            <person name="Andre B."/>
            <person name="Ansorge W."/>
            <person name="Benes V."/>
            <person name="Brueckner M."/>
            <person name="Delius H."/>
            <person name="Dubois E."/>
            <person name="Duesterhoeft A."/>
            <person name="Entian K.-D."/>
            <person name="Floeth M."/>
            <person name="Goffeau A."/>
            <person name="Hebling U."/>
            <person name="Heumann K."/>
            <person name="Heuss-Neitzel D."/>
            <person name="Hilbert H."/>
            <person name="Hilger F."/>
            <person name="Kleine K."/>
            <person name="Koetter P."/>
            <person name="Louis E.J."/>
            <person name="Messenguy F."/>
            <person name="Mewes H.-W."/>
            <person name="Miosga T."/>
            <person name="Moestl D."/>
            <person name="Mueller-Auer S."/>
            <person name="Nentwich U."/>
            <person name="Obermaier B."/>
            <person name="Piravandi E."/>
            <person name="Pohl T.M."/>
            <person name="Portetelle D."/>
            <person name="Purnelle B."/>
            <person name="Rechmann S."/>
            <person name="Rieger M."/>
            <person name="Rinke M."/>
            <person name="Rose M."/>
            <person name="Scharfe M."/>
            <person name="Scherens B."/>
            <person name="Scholler P."/>
            <person name="Schwager C."/>
            <person name="Schwarz S."/>
            <person name="Underwood A.P."/>
            <person name="Urrestarazu L.A."/>
            <person name="Vandenbol M."/>
            <person name="Verhasselt P."/>
            <person name="Vierendeels F."/>
            <person name="Voet M."/>
            <person name="Volckaert G."/>
            <person name="Voss H."/>
            <person name="Wambutt R."/>
            <person name="Wedler E."/>
            <person name="Wedler H."/>
            <person name="Zimmermann F.K."/>
            <person name="Zollner A."/>
            <person name="Hani J."/>
            <person name="Hoheisel J.D."/>
        </authorList>
    </citation>
    <scope>NUCLEOTIDE SEQUENCE [LARGE SCALE GENOMIC DNA]</scope>
    <source>
        <strain>ATCC 204508 / S288c</strain>
    </source>
</reference>
<reference key="2">
    <citation type="journal article" date="2014" name="G3 (Bethesda)">
        <title>The reference genome sequence of Saccharomyces cerevisiae: Then and now.</title>
        <authorList>
            <person name="Engel S.R."/>
            <person name="Dietrich F.S."/>
            <person name="Fisk D.G."/>
            <person name="Binkley G."/>
            <person name="Balakrishnan R."/>
            <person name="Costanzo M.C."/>
            <person name="Dwight S.S."/>
            <person name="Hitz B.C."/>
            <person name="Karra K."/>
            <person name="Nash R.S."/>
            <person name="Weng S."/>
            <person name="Wong E.D."/>
            <person name="Lloyd P."/>
            <person name="Skrzypek M.S."/>
            <person name="Miyasato S.R."/>
            <person name="Simison M."/>
            <person name="Cherry J.M."/>
        </authorList>
    </citation>
    <scope>GENOME REANNOTATION</scope>
    <source>
        <strain>ATCC 204508 / S288c</strain>
    </source>
</reference>
<reference key="3">
    <citation type="journal article" date="2002" name="Proc. Natl. Acad. Sci. U.S.A.">
        <title>Transcriptional response of Saccharomyces cerevisiae to DNA-damaging agents does not identify the genes that protect against these agents.</title>
        <authorList>
            <person name="Birrell G.W."/>
            <person name="Brown J.A."/>
            <person name="Wu H.I."/>
            <person name="Giaever G."/>
            <person name="Chu A.M."/>
            <person name="Davis R.W."/>
            <person name="Brown J.M."/>
        </authorList>
    </citation>
    <scope>FUNCTION</scope>
</reference>
<reference key="4">
    <citation type="journal article" date="2003" name="Nature">
        <title>Global analysis of protein expression in yeast.</title>
        <authorList>
            <person name="Ghaemmaghami S."/>
            <person name="Huh W.-K."/>
            <person name="Bower K."/>
            <person name="Howson R.W."/>
            <person name="Belle A."/>
            <person name="Dephoure N."/>
            <person name="O'Shea E.K."/>
            <person name="Weissman J.S."/>
        </authorList>
    </citation>
    <scope>LEVEL OF PROTEIN EXPRESSION [LARGE SCALE ANALYSIS]</scope>
</reference>
<reference key="5">
    <citation type="journal article" date="2003" name="Proc. Natl. Acad. Sci. U.S.A.">
        <title>The proteome of Saccharomyces cerevisiae mitochondria.</title>
        <authorList>
            <person name="Sickmann A."/>
            <person name="Reinders J."/>
            <person name="Wagner Y."/>
            <person name="Joppich C."/>
            <person name="Zahedi R.P."/>
            <person name="Meyer H.E."/>
            <person name="Schoenfisch B."/>
            <person name="Perschil I."/>
            <person name="Chacinska A."/>
            <person name="Guiard B."/>
            <person name="Rehling P."/>
            <person name="Pfanner N."/>
            <person name="Meisinger C."/>
        </authorList>
    </citation>
    <scope>SUBCELLULAR LOCATION [LARGE SCALE ANALYSIS]</scope>
    <source>
        <strain>ATCC 76625 / YPH499</strain>
    </source>
</reference>
<reference key="6">
    <citation type="journal article" date="2005" name="PLoS Genet.">
        <title>Genome-wide requirements for resistance to functionally distinct DNA-damaging agents.</title>
        <authorList>
            <person name="Lee W."/>
            <person name="St Onge R.P."/>
            <person name="Proctor M."/>
            <person name="Flaherty P."/>
            <person name="Jordan M.I."/>
            <person name="Arkin A.P."/>
            <person name="Davis R.W."/>
            <person name="Nislow C."/>
            <person name="Giaever G."/>
        </authorList>
    </citation>
    <scope>FUNCTION</scope>
</reference>
<reference key="7">
    <citation type="journal article" date="2011" name="Genome Res.">
        <title>Selective ploidy ablation, a high-throughput plasmid transfer protocol, identifies new genes affecting topoisomerase I-induced DNA damage.</title>
        <authorList>
            <person name="Reid R.J."/>
            <person name="Gonzalez-Barrera S."/>
            <person name="Sunjevaric I."/>
            <person name="Alvaro D."/>
            <person name="Ciccone S."/>
            <person name="Wagner M."/>
            <person name="Rothstein R."/>
        </authorList>
    </citation>
    <scope>DISRUPTION PHENOTYPE</scope>
</reference>
<sequence length="326" mass="36677">MNIDCLCRWVVLPLLRYPLLVALVLRWSLSDSISICLTIYTLLINAFLIANSYIKRSGQVAWKSLREFKNGIVLITGGSKGLGRAIVSQLLQDYSNLTILNVDICPSSVRNTRVKDLICDLSDDEEVAALLNLLKRKYKNEIRLIVNNAGVRANFTGFNGMERDNLDKIFKINTFAPLQFIQELAPSRHSTRQCYIVNIASILGILTPAKVAAYAASKAALIAFHQSYSFELQNEGVRNIRTLLVTPGQLNTEMFAGFKPPRQFFAPVIDITTLAAKIVRYCELGQRGQLNEPFYCSFAHLLMCVPYSLQRIVRSFSRIDCCLPDE</sequence>
<keyword id="KW-0472">Membrane</keyword>
<keyword id="KW-0496">Mitochondrion</keyword>
<keyword id="KW-0521">NADP</keyword>
<keyword id="KW-0560">Oxidoreductase</keyword>
<keyword id="KW-1185">Reference proteome</keyword>
<keyword id="KW-0812">Transmembrane</keyword>
<keyword id="KW-1133">Transmembrane helix</keyword>
<dbReference type="EC" id="1.-.-.-"/>
<dbReference type="EMBL" id="U20939">
    <property type="protein sequence ID" value="AAB67505.1"/>
    <property type="molecule type" value="Genomic_DNA"/>
</dbReference>
<dbReference type="EMBL" id="BK006945">
    <property type="protein sequence ID" value="DAA09728.1"/>
    <property type="molecule type" value="Genomic_DNA"/>
</dbReference>
<dbReference type="PIR" id="S53413">
    <property type="entry name" value="S53413"/>
</dbReference>
<dbReference type="RefSeq" id="NP_013530.1">
    <property type="nucleotide sequence ID" value="NM_001182314.1"/>
</dbReference>
<dbReference type="SMR" id="Q06417"/>
<dbReference type="BioGRID" id="31686">
    <property type="interactions" value="291"/>
</dbReference>
<dbReference type="DIP" id="DIP-4567N"/>
<dbReference type="FunCoup" id="Q06417">
    <property type="interactions" value="725"/>
</dbReference>
<dbReference type="IntAct" id="Q06417">
    <property type="interactions" value="7"/>
</dbReference>
<dbReference type="MINT" id="Q06417"/>
<dbReference type="STRING" id="4932.YLR426W"/>
<dbReference type="iPTMnet" id="Q06417"/>
<dbReference type="PaxDb" id="4932-YLR426W"/>
<dbReference type="PeptideAtlas" id="Q06417"/>
<dbReference type="TopDownProteomics" id="Q06417"/>
<dbReference type="EnsemblFungi" id="YLR426W_mRNA">
    <property type="protein sequence ID" value="YLR426W"/>
    <property type="gene ID" value="YLR426W"/>
</dbReference>
<dbReference type="GeneID" id="851146"/>
<dbReference type="KEGG" id="sce:YLR426W"/>
<dbReference type="AGR" id="SGD:S000004418"/>
<dbReference type="SGD" id="S000004418">
    <property type="gene designation" value="TDA5"/>
</dbReference>
<dbReference type="VEuPathDB" id="FungiDB:YLR426W"/>
<dbReference type="eggNOG" id="KOG1201">
    <property type="taxonomic scope" value="Eukaryota"/>
</dbReference>
<dbReference type="GeneTree" id="ENSGT00940000169042"/>
<dbReference type="HOGENOM" id="CLU_010194_5_1_1"/>
<dbReference type="InParanoid" id="Q06417"/>
<dbReference type="OMA" id="MFKDVEP"/>
<dbReference type="OrthoDB" id="5840532at2759"/>
<dbReference type="BioCyc" id="YEAST:G3O-32486-MONOMER"/>
<dbReference type="Reactome" id="R-SCE-193144">
    <property type="pathway name" value="Estrogen biosynthesis"/>
</dbReference>
<dbReference type="Reactome" id="R-SCE-2187335">
    <property type="pathway name" value="The retinoid cycle in cones (daylight vision)"/>
</dbReference>
<dbReference type="Reactome" id="R-SCE-5365859">
    <property type="pathway name" value="RA biosynthesis pathway"/>
</dbReference>
<dbReference type="Reactome" id="R-SCE-8964572">
    <property type="pathway name" value="Lipid particle organization"/>
</dbReference>
<dbReference type="BioGRID-ORCS" id="851146">
    <property type="hits" value="3 hits in 10 CRISPR screens"/>
</dbReference>
<dbReference type="PRO" id="PR:Q06417"/>
<dbReference type="Proteomes" id="UP000002311">
    <property type="component" value="Chromosome XII"/>
</dbReference>
<dbReference type="RNAct" id="Q06417">
    <property type="molecule type" value="protein"/>
</dbReference>
<dbReference type="GO" id="GO:0005783">
    <property type="term" value="C:endoplasmic reticulum"/>
    <property type="evidence" value="ECO:0007005"/>
    <property type="project" value="SGD"/>
</dbReference>
<dbReference type="GO" id="GO:0031966">
    <property type="term" value="C:mitochondrial membrane"/>
    <property type="evidence" value="ECO:0007669"/>
    <property type="project" value="UniProtKB-SubCell"/>
</dbReference>
<dbReference type="GO" id="GO:0005739">
    <property type="term" value="C:mitochondrion"/>
    <property type="evidence" value="ECO:0007005"/>
    <property type="project" value="SGD"/>
</dbReference>
<dbReference type="GO" id="GO:0016616">
    <property type="term" value="F:oxidoreductase activity, acting on the CH-OH group of donors, NAD or NADP as acceptor"/>
    <property type="evidence" value="ECO:0000318"/>
    <property type="project" value="GO_Central"/>
</dbReference>
<dbReference type="GO" id="GO:0009410">
    <property type="term" value="P:response to xenobiotic stimulus"/>
    <property type="evidence" value="ECO:0007001"/>
    <property type="project" value="SGD"/>
</dbReference>
<dbReference type="Gene3D" id="3.40.50.720">
    <property type="entry name" value="NAD(P)-binding Rossmann-like Domain"/>
    <property type="match status" value="1"/>
</dbReference>
<dbReference type="InterPro" id="IPR036291">
    <property type="entry name" value="NAD(P)-bd_dom_sf"/>
</dbReference>
<dbReference type="InterPro" id="IPR020904">
    <property type="entry name" value="Sc_DH/Rdtase_CS"/>
</dbReference>
<dbReference type="InterPro" id="IPR002347">
    <property type="entry name" value="SDR_fam"/>
</dbReference>
<dbReference type="PANTHER" id="PTHR24322:SF743">
    <property type="entry name" value="AER111WP"/>
    <property type="match status" value="1"/>
</dbReference>
<dbReference type="PANTHER" id="PTHR24322">
    <property type="entry name" value="PKSB"/>
    <property type="match status" value="1"/>
</dbReference>
<dbReference type="Pfam" id="PF00106">
    <property type="entry name" value="adh_short"/>
    <property type="match status" value="1"/>
</dbReference>
<dbReference type="PRINTS" id="PR00081">
    <property type="entry name" value="GDHRDH"/>
</dbReference>
<dbReference type="PRINTS" id="PR00080">
    <property type="entry name" value="SDRFAMILY"/>
</dbReference>
<dbReference type="SUPFAM" id="SSF51735">
    <property type="entry name" value="NAD(P)-binding Rossmann-fold domains"/>
    <property type="match status" value="1"/>
</dbReference>
<dbReference type="PROSITE" id="PS00061">
    <property type="entry name" value="ADH_SHORT"/>
    <property type="match status" value="1"/>
</dbReference>
<comment type="function">
    <text evidence="5 7">Involved in the resistance to DNA-damaging agents.</text>
</comment>
<comment type="subcellular location">
    <subcellularLocation>
        <location evidence="9">Mitochondrion membrane</location>
        <topology evidence="9">Multi-pass membrane protein</topology>
    </subcellularLocation>
</comment>
<comment type="disruption phenotype">
    <text evidence="8">Leads to cell death when overexpressing the camptothecin mimetic TOP1-T(722)A mutant.</text>
</comment>
<comment type="miscellaneous">
    <text evidence="6">Present with 2130 molecules/cell in log phase SD medium.</text>
</comment>
<comment type="similarity">
    <text evidence="9">Belongs to the short-chain dehydrogenases/reductases (SDR) family.</text>
</comment>